<protein>
    <recommendedName>
        <fullName evidence="1">5-methylthioadenosine/S-adenosylhomocysteine deaminase</fullName>
        <shortName evidence="1">MTA/SAH deaminase</shortName>
        <ecNumber evidence="1">3.5.4.28</ecNumber>
        <ecNumber evidence="1">3.5.4.31</ecNumber>
    </recommendedName>
</protein>
<organism>
    <name type="scientific">Bacillus anthracis (strain A0248)</name>
    <dbReference type="NCBI Taxonomy" id="592021"/>
    <lineage>
        <taxon>Bacteria</taxon>
        <taxon>Bacillati</taxon>
        <taxon>Bacillota</taxon>
        <taxon>Bacilli</taxon>
        <taxon>Bacillales</taxon>
        <taxon>Bacillaceae</taxon>
        <taxon>Bacillus</taxon>
        <taxon>Bacillus cereus group</taxon>
    </lineage>
</organism>
<accession>C3P768</accession>
<gene>
    <name evidence="1" type="primary">mtaD</name>
    <name type="ordered locus">BAA_1934</name>
</gene>
<feature type="chain" id="PRO_1000165236" description="5-methylthioadenosine/S-adenosylhomocysteine deaminase">
    <location>
        <begin position="1"/>
        <end position="435"/>
    </location>
</feature>
<feature type="binding site" evidence="1">
    <location>
        <position position="65"/>
    </location>
    <ligand>
        <name>Zn(2+)</name>
        <dbReference type="ChEBI" id="CHEBI:29105"/>
    </ligand>
</feature>
<feature type="binding site" evidence="1">
    <location>
        <position position="67"/>
    </location>
    <ligand>
        <name>Zn(2+)</name>
        <dbReference type="ChEBI" id="CHEBI:29105"/>
    </ligand>
</feature>
<feature type="binding site" evidence="1">
    <location>
        <position position="94"/>
    </location>
    <ligand>
        <name>substrate</name>
    </ligand>
</feature>
<feature type="binding site" evidence="1">
    <location>
        <position position="150"/>
    </location>
    <ligand>
        <name>substrate</name>
    </ligand>
</feature>
<feature type="binding site" evidence="1">
    <location>
        <position position="189"/>
    </location>
    <ligand>
        <name>substrate</name>
    </ligand>
</feature>
<feature type="binding site" evidence="1">
    <location>
        <position position="216"/>
    </location>
    <ligand>
        <name>Zn(2+)</name>
        <dbReference type="ChEBI" id="CHEBI:29105"/>
    </ligand>
</feature>
<feature type="binding site" evidence="1">
    <location>
        <position position="219"/>
    </location>
    <ligand>
        <name>substrate</name>
    </ligand>
</feature>
<feature type="binding site" evidence="1">
    <location>
        <position position="304"/>
    </location>
    <ligand>
        <name>substrate</name>
    </ligand>
</feature>
<feature type="binding site" evidence="1">
    <location>
        <position position="304"/>
    </location>
    <ligand>
        <name>Zn(2+)</name>
        <dbReference type="ChEBI" id="CHEBI:29105"/>
    </ligand>
</feature>
<reference key="1">
    <citation type="submission" date="2009-04" db="EMBL/GenBank/DDBJ databases">
        <title>Genome sequence of Bacillus anthracis A0248.</title>
        <authorList>
            <person name="Dodson R.J."/>
            <person name="Munk A.C."/>
            <person name="Bruce D."/>
            <person name="Detter C."/>
            <person name="Tapia R."/>
            <person name="Sutton G."/>
            <person name="Sims D."/>
            <person name="Brettin T."/>
        </authorList>
    </citation>
    <scope>NUCLEOTIDE SEQUENCE [LARGE SCALE GENOMIC DNA]</scope>
    <source>
        <strain>A0248</strain>
    </source>
</reference>
<keyword id="KW-0378">Hydrolase</keyword>
<keyword id="KW-0479">Metal-binding</keyword>
<keyword id="KW-0862">Zinc</keyword>
<name>MTAD_BACAA</name>
<sequence>MKTTYVNATIVTMNEQNEVIENGYIIVENDKIIDVNSGEFASDFEVDEVIDMKGKWVLPGLVNTHTHVVMSLLRGIGDDMLLQPWLETRIWPLESQFTPELAVASTELGLLEMVKSGTTSFSDMFNPIGVDQDAIMETVSRSGMRAAVSRTLFSFGTQEDEKKAIEEAEKYVKRYYNESGMLTTMVAPHSPYTCSTELLEECARIAVENQTMVHIHLSETEREVRDIEAQYGKRPVEYVASCGLFKRPTVIAHGVVLNDNERAFLAEHDVRVAHNPNSNLKLGSGIANVKAMLEAGMKVGIATDSVASNNNLDMFEEMRIATLLQKGIHQDATALPVETALTLATKGAAEVIGMKQTGSLEVGKCADFITIDPSNKPHLQPADEVLSHLVYAASGKDISDVIINGKRVVWNGECKTLDEERIIFEASRYKRGLQR</sequence>
<comment type="function">
    <text evidence="1">Catalyzes the deamination of 5-methylthioadenosine and S-adenosyl-L-homocysteine into 5-methylthioinosine and S-inosyl-L-homocysteine, respectively. Is also able to deaminate adenosine.</text>
</comment>
<comment type="catalytic activity">
    <reaction evidence="1">
        <text>S-adenosyl-L-homocysteine + H2O + H(+) = S-inosyl-L-homocysteine + NH4(+)</text>
        <dbReference type="Rhea" id="RHEA:20716"/>
        <dbReference type="ChEBI" id="CHEBI:15377"/>
        <dbReference type="ChEBI" id="CHEBI:15378"/>
        <dbReference type="ChEBI" id="CHEBI:28938"/>
        <dbReference type="ChEBI" id="CHEBI:57856"/>
        <dbReference type="ChEBI" id="CHEBI:57985"/>
        <dbReference type="EC" id="3.5.4.28"/>
    </reaction>
</comment>
<comment type="catalytic activity">
    <reaction evidence="1">
        <text>S-methyl-5'-thioadenosine + H2O + H(+) = S-methyl-5'-thioinosine + NH4(+)</text>
        <dbReference type="Rhea" id="RHEA:25025"/>
        <dbReference type="ChEBI" id="CHEBI:15377"/>
        <dbReference type="ChEBI" id="CHEBI:15378"/>
        <dbReference type="ChEBI" id="CHEBI:17509"/>
        <dbReference type="ChEBI" id="CHEBI:28938"/>
        <dbReference type="ChEBI" id="CHEBI:48595"/>
        <dbReference type="EC" id="3.5.4.31"/>
    </reaction>
</comment>
<comment type="cofactor">
    <cofactor evidence="1">
        <name>Zn(2+)</name>
        <dbReference type="ChEBI" id="CHEBI:29105"/>
    </cofactor>
    <text evidence="1">Binds 1 zinc ion per subunit.</text>
</comment>
<comment type="similarity">
    <text evidence="1">Belongs to the metallo-dependent hydrolases superfamily. MTA/SAH deaminase family.</text>
</comment>
<evidence type="ECO:0000255" key="1">
    <source>
        <dbReference type="HAMAP-Rule" id="MF_01281"/>
    </source>
</evidence>
<dbReference type="EC" id="3.5.4.28" evidence="1"/>
<dbReference type="EC" id="3.5.4.31" evidence="1"/>
<dbReference type="EMBL" id="CP001598">
    <property type="protein sequence ID" value="ACQ46769.1"/>
    <property type="molecule type" value="Genomic_DNA"/>
</dbReference>
<dbReference type="SMR" id="C3P768"/>
<dbReference type="KEGG" id="bai:BAA_1934"/>
<dbReference type="HOGENOM" id="CLU_012358_2_0_9"/>
<dbReference type="GO" id="GO:0090614">
    <property type="term" value="F:5'-methylthioadenosine deaminase activity"/>
    <property type="evidence" value="ECO:0007669"/>
    <property type="project" value="UniProtKB-UniRule"/>
</dbReference>
<dbReference type="GO" id="GO:0046872">
    <property type="term" value="F:metal ion binding"/>
    <property type="evidence" value="ECO:0007669"/>
    <property type="project" value="UniProtKB-KW"/>
</dbReference>
<dbReference type="GO" id="GO:0050270">
    <property type="term" value="F:S-adenosylhomocysteine deaminase activity"/>
    <property type="evidence" value="ECO:0007669"/>
    <property type="project" value="UniProtKB-UniRule"/>
</dbReference>
<dbReference type="CDD" id="cd01298">
    <property type="entry name" value="ATZ_TRZ_like"/>
    <property type="match status" value="1"/>
</dbReference>
<dbReference type="FunFam" id="3.20.20.140:FF:000014">
    <property type="entry name" value="5-methylthioadenosine/S-adenosylhomocysteine deaminase"/>
    <property type="match status" value="1"/>
</dbReference>
<dbReference type="Gene3D" id="3.20.20.140">
    <property type="entry name" value="Metal-dependent hydrolases"/>
    <property type="match status" value="1"/>
</dbReference>
<dbReference type="Gene3D" id="2.30.40.10">
    <property type="entry name" value="Urease, subunit C, domain 1"/>
    <property type="match status" value="1"/>
</dbReference>
<dbReference type="HAMAP" id="MF_01281">
    <property type="entry name" value="MTA_SAH_deamin"/>
    <property type="match status" value="1"/>
</dbReference>
<dbReference type="InterPro" id="IPR006680">
    <property type="entry name" value="Amidohydro-rel"/>
</dbReference>
<dbReference type="InterPro" id="IPR023512">
    <property type="entry name" value="Deaminase_MtaD/DadD"/>
</dbReference>
<dbReference type="InterPro" id="IPR011059">
    <property type="entry name" value="Metal-dep_hydrolase_composite"/>
</dbReference>
<dbReference type="InterPro" id="IPR032466">
    <property type="entry name" value="Metal_Hydrolase"/>
</dbReference>
<dbReference type="InterPro" id="IPR050287">
    <property type="entry name" value="MTA/SAH_deaminase"/>
</dbReference>
<dbReference type="NCBIfam" id="NF012037">
    <property type="entry name" value="PRK15493.1"/>
    <property type="match status" value="1"/>
</dbReference>
<dbReference type="PANTHER" id="PTHR43794:SF11">
    <property type="entry name" value="AMIDOHYDROLASE-RELATED DOMAIN-CONTAINING PROTEIN"/>
    <property type="match status" value="1"/>
</dbReference>
<dbReference type="PANTHER" id="PTHR43794">
    <property type="entry name" value="AMINOHYDROLASE SSNA-RELATED"/>
    <property type="match status" value="1"/>
</dbReference>
<dbReference type="Pfam" id="PF01979">
    <property type="entry name" value="Amidohydro_1"/>
    <property type="match status" value="1"/>
</dbReference>
<dbReference type="SUPFAM" id="SSF51338">
    <property type="entry name" value="Composite domain of metallo-dependent hydrolases"/>
    <property type="match status" value="1"/>
</dbReference>
<dbReference type="SUPFAM" id="SSF51556">
    <property type="entry name" value="Metallo-dependent hydrolases"/>
    <property type="match status" value="1"/>
</dbReference>
<proteinExistence type="inferred from homology"/>